<comment type="function">
    <text evidence="8">Beta-glucosidase acting poorly on artificial aryl beta-glucosides. Has no activity toward the chromogenic substrate 6-bromo-2-naphthyl-beta-D-glucoside (6BNGlc).</text>
</comment>
<comment type="catalytic activity">
    <reaction evidence="8">
        <text>Hydrolysis of terminal, non-reducing beta-D-glucosyl residues with release of beta-D-glucose.</text>
        <dbReference type="EC" id="3.2.1.21"/>
    </reaction>
</comment>
<comment type="catalytic activity">
    <reaction evidence="8">
        <text>DIMBOA beta-D-glucoside + H2O = DIMBOA + D-glucose</text>
        <dbReference type="Rhea" id="RHEA:33975"/>
        <dbReference type="ChEBI" id="CHEBI:4167"/>
        <dbReference type="ChEBI" id="CHEBI:15377"/>
        <dbReference type="ChEBI" id="CHEBI:18048"/>
        <dbReference type="ChEBI" id="CHEBI:37573"/>
        <dbReference type="EC" id="3.2.1.182"/>
    </reaction>
</comment>
<comment type="catalytic activity">
    <reaction evidence="8">
        <text>DIBOA beta-D-glucoside + H2O = DIBOA + D-glucose</text>
        <dbReference type="Rhea" id="RHEA:33979"/>
        <dbReference type="ChEBI" id="CHEBI:4167"/>
        <dbReference type="ChEBI" id="CHEBI:15377"/>
        <dbReference type="ChEBI" id="CHEBI:63558"/>
        <dbReference type="ChEBI" id="CHEBI:63670"/>
        <dbReference type="EC" id="3.2.1.182"/>
    </reaction>
</comment>
<comment type="biophysicochemical properties">
    <kinetics>
        <KM evidence="8">0.84 mM for p-nitrophenyl beta-D-glucopyranoside (PNPG) (with recombinant enzyme)</KM>
        <KM evidence="8">1.25 mM for o-nitrophenyl beta-D-glucopyranoside (with recombinant enzyme)</KM>
        <Vmax evidence="8">52.8 umol/h/ug enzyme with p-nitrophenyl beta-D-glucopyranoside as substrate (with recombinant enzyme)</Vmax>
        <Vmax evidence="8">168.3 umol/h/ug enzyme with o-nitrophenyl beta-D-glucopyranoside as substrate (with recombinant enzyme)</Vmax>
    </kinetics>
</comment>
<comment type="subunit">
    <text evidence="8">Homo- and heterodimer.</text>
</comment>
<comment type="subcellular location">
    <subcellularLocation>
        <location evidence="9">Plastid</location>
        <location evidence="9">Chloroplast</location>
    </subcellularLocation>
</comment>
<comment type="tissue specificity">
    <text evidence="8">Expressed in leaves only starting at day 6 after germination.</text>
</comment>
<comment type="similarity">
    <text evidence="9">Belongs to the glycosyl hydrolase 1 family.</text>
</comment>
<sequence length="563" mass="64111">MAPLLAAAMNHAAHPVLRSHLGPNNESFSRHHLSSSPQSSKRRFNLSFTPRSARVGNQNGVQLLSPSEIPRRDWFPSDFIFGAATSAYQIEGAWNEDGKGESNWDHFCHNFPERIMDGSNADIGANSYHMYKTDVRLLKEMGMDAYRFSISWPRILPKGTVEGGINQDGIDYYKRLINLLLENGIEPYVTIFHWDVPQALEEKYGGFLDKTQKRIVNDYKNFAKVCFDNFGDKVKNWLTFNEPQTFTSFSYGTGVFAPGRCSPGLDCAIPTGNSLVEPYIAGHNILLAHAEAVDLYNKYYKGENGRIGLAFDVMGRVPYGTSFLDEQAKERSMDINLGWFLEPVVRGDYPFSMRSLARERLPFFSDKQQEKLVGSYNMLGINYYTSIFSKHIDISPKYSPVLNTDDAYASQETYGPDGKPIGPPMGNPWIYLYPEGLKDILMIMKNKYGNPPIYITENGIGDVDTKEKPLPMEAALNDYKRLDYIQRHISTLKESIDLGANVHGYFAWSLLDNFEWYAGYTERYGIVYVDRKNNYTRYMKESAKWLKEFNTAKKPSKKIITPA</sequence>
<name>HGGL2_MAIZE</name>
<feature type="transit peptide" description="Chloroplast" evidence="5">
    <location>
        <begin position="1"/>
        <end position="51"/>
    </location>
</feature>
<feature type="chain" id="PRO_0000424097" description="4-hydroxy-7-methoxy-3-oxo-3,4-dihydro-2H-1,4-benzoxazin-2-yl glucoside beta-D-glucosidase 2, chloroplastic">
    <location>
        <begin position="52"/>
        <end position="563"/>
    </location>
</feature>
<feature type="region of interest" description="Disordered" evidence="7">
    <location>
        <begin position="17"/>
        <end position="43"/>
    </location>
</feature>
<feature type="region of interest" description="Dimerization" evidence="1">
    <location>
        <begin position="322"/>
        <end position="358"/>
    </location>
</feature>
<feature type="region of interest" description="Dimerization" evidence="1">
    <location>
        <begin position="391"/>
        <end position="402"/>
    </location>
</feature>
<feature type="region of interest" description="Dimerization" evidence="1">
    <location>
        <begin position="447"/>
        <end position="450"/>
    </location>
</feature>
<feature type="active site" description="Proton donor" evidence="2">
    <location>
        <position position="242"/>
    </location>
</feature>
<feature type="active site" description="Nucleophile" evidence="6">
    <location>
        <position position="457"/>
    </location>
</feature>
<feature type="binding site" evidence="2">
    <location>
        <position position="89"/>
    </location>
    <ligand>
        <name>a beta-D-glucoside</name>
        <dbReference type="ChEBI" id="CHEBI:22798"/>
    </ligand>
</feature>
<feature type="binding site" evidence="2">
    <location>
        <position position="193"/>
    </location>
    <ligand>
        <name>a beta-D-glucoside</name>
        <dbReference type="ChEBI" id="CHEBI:22798"/>
    </ligand>
</feature>
<feature type="binding site" evidence="2">
    <location>
        <begin position="241"/>
        <end position="242"/>
    </location>
    <ligand>
        <name>a beta-D-glucoside</name>
        <dbReference type="ChEBI" id="CHEBI:22798"/>
    </ligand>
</feature>
<feature type="binding site" evidence="2">
    <location>
        <position position="384"/>
    </location>
    <ligand>
        <name>a beta-D-glucoside</name>
        <dbReference type="ChEBI" id="CHEBI:22798"/>
    </ligand>
</feature>
<feature type="binding site" evidence="4">
    <location>
        <position position="457"/>
    </location>
    <ligand>
        <name>a beta-D-glucoside</name>
        <dbReference type="ChEBI" id="CHEBI:22798"/>
    </ligand>
</feature>
<feature type="binding site" evidence="2">
    <location>
        <position position="508"/>
    </location>
    <ligand>
        <name>a beta-D-glucoside</name>
        <dbReference type="ChEBI" id="CHEBI:22798"/>
    </ligand>
</feature>
<feature type="binding site" evidence="2">
    <location>
        <begin position="515"/>
        <end position="516"/>
    </location>
    <ligand>
        <name>a beta-D-glucoside</name>
        <dbReference type="ChEBI" id="CHEBI:22798"/>
    </ligand>
</feature>
<feature type="binding site" evidence="3">
    <location>
        <position position="524"/>
    </location>
    <ligand>
        <name>a beta-D-glucoside</name>
        <dbReference type="ChEBI" id="CHEBI:22798"/>
    </ligand>
</feature>
<feature type="disulfide bond" evidence="2">
    <location>
        <begin position="261"/>
        <end position="267"/>
    </location>
</feature>
<protein>
    <recommendedName>
        <fullName>4-hydroxy-7-methoxy-3-oxo-3,4-dihydro-2H-1,4-benzoxazin-2-yl glucoside beta-D-glucosidase 2, chloroplastic</fullName>
        <ecNumber evidence="8">3.2.1.182</ecNumber>
    </recommendedName>
    <alternativeName>
        <fullName>Beta-glucosidase 2</fullName>
        <shortName>ZmGlu2</shortName>
        <ecNumber evidence="8">3.2.1.21</ecNumber>
    </alternativeName>
</protein>
<reference key="1">
    <citation type="journal article" date="1996" name="Plant Physiol.">
        <title>Nucleotide Sequence of a Beta-Glucosidase (glu2) cDNA from maize (Accession No. U44087) (PGR96-009).</title>
        <authorList>
            <person name="Bandaranayake H."/>
            <person name="Esen A."/>
        </authorList>
    </citation>
    <scope>NUCLEOTIDE SEQUENCE [MRNA]</scope>
    <source>
        <strain>cv. B73</strain>
    </source>
</reference>
<reference key="2">
    <citation type="journal article" date="1999" name="Biotechnol. Bioeng.">
        <title>Expression of soluble and catalytically active plant (monocot) beta-glucosidases in E. coli.</title>
        <authorList>
            <person name="Cicek M."/>
            <person name="Esen A."/>
        </authorList>
    </citation>
    <scope>TISSUE SPECIFICITY</scope>
    <scope>FUNCTION</scope>
    <scope>CATALYTIC ACTIVITY</scope>
    <scope>SUBUNIT</scope>
    <scope>SUBSTRATE SPECIFICITY</scope>
    <scope>BIOPHYSICOCHEMICAL PROPERTIES</scope>
</reference>
<gene>
    <name type="primary">GLU2</name>
</gene>
<dbReference type="EC" id="3.2.1.182" evidence="8"/>
<dbReference type="EC" id="3.2.1.21" evidence="8"/>
<dbReference type="EMBL" id="U44087">
    <property type="protein sequence ID" value="AAD09850.1"/>
    <property type="molecule type" value="mRNA"/>
</dbReference>
<dbReference type="PIR" id="T02720">
    <property type="entry name" value="T02720"/>
</dbReference>
<dbReference type="RefSeq" id="NP_001105892.1">
    <property type="nucleotide sequence ID" value="NM_001112422.1"/>
</dbReference>
<dbReference type="SMR" id="Q41761"/>
<dbReference type="STRING" id="4577.Q41761"/>
<dbReference type="CAZy" id="GH1">
    <property type="family name" value="Glycoside Hydrolase Family 1"/>
</dbReference>
<dbReference type="PaxDb" id="4577-GRMZM2G008247_P01"/>
<dbReference type="GeneID" id="732807"/>
<dbReference type="KEGG" id="zma:732807"/>
<dbReference type="MaizeGDB" id="112147"/>
<dbReference type="eggNOG" id="KOG0626">
    <property type="taxonomic scope" value="Eukaryota"/>
</dbReference>
<dbReference type="InParanoid" id="Q41761"/>
<dbReference type="OrthoDB" id="774279at2759"/>
<dbReference type="SABIO-RK" id="Q41761"/>
<dbReference type="Proteomes" id="UP000007305">
    <property type="component" value="Unplaced"/>
</dbReference>
<dbReference type="ExpressionAtlas" id="Q41761">
    <property type="expression patterns" value="baseline and differential"/>
</dbReference>
<dbReference type="GO" id="GO:0009507">
    <property type="term" value="C:chloroplast"/>
    <property type="evidence" value="ECO:0007669"/>
    <property type="project" value="UniProtKB-SubCell"/>
</dbReference>
<dbReference type="GO" id="GO:0008422">
    <property type="term" value="F:beta-glucosidase activity"/>
    <property type="evidence" value="ECO:0000318"/>
    <property type="project" value="GO_Central"/>
</dbReference>
<dbReference type="GO" id="GO:0102726">
    <property type="term" value="F:DIMBOA glucoside beta-D-glucosidase activity"/>
    <property type="evidence" value="ECO:0007669"/>
    <property type="project" value="UniProtKB-EC"/>
</dbReference>
<dbReference type="GO" id="GO:0005975">
    <property type="term" value="P:carbohydrate metabolic process"/>
    <property type="evidence" value="ECO:0007669"/>
    <property type="project" value="InterPro"/>
</dbReference>
<dbReference type="FunFam" id="3.20.20.80:FF:000041">
    <property type="entry name" value="Beta-glucosidase 7"/>
    <property type="match status" value="1"/>
</dbReference>
<dbReference type="Gene3D" id="3.20.20.80">
    <property type="entry name" value="Glycosidases"/>
    <property type="match status" value="1"/>
</dbReference>
<dbReference type="InterPro" id="IPR001360">
    <property type="entry name" value="Glyco_hydro_1"/>
</dbReference>
<dbReference type="InterPro" id="IPR018120">
    <property type="entry name" value="Glyco_hydro_1_AS"/>
</dbReference>
<dbReference type="InterPro" id="IPR033132">
    <property type="entry name" value="Glyco_hydro_1_N_CS"/>
</dbReference>
<dbReference type="InterPro" id="IPR017853">
    <property type="entry name" value="Glycoside_hydrolase_SF"/>
</dbReference>
<dbReference type="PANTHER" id="PTHR10353:SF326">
    <property type="entry name" value="4-HYDROXY-7-METHOXY-3-OXO-3,4-DIHYDRO-2H-1,4-BENZOXAZIN-2-YL GLUCOSIDE BETA-D-GLUCOSIDASE 1, CHLOROPLASTIC"/>
    <property type="match status" value="1"/>
</dbReference>
<dbReference type="PANTHER" id="PTHR10353">
    <property type="entry name" value="GLYCOSYL HYDROLASE"/>
    <property type="match status" value="1"/>
</dbReference>
<dbReference type="Pfam" id="PF00232">
    <property type="entry name" value="Glyco_hydro_1"/>
    <property type="match status" value="1"/>
</dbReference>
<dbReference type="PRINTS" id="PR00131">
    <property type="entry name" value="GLHYDRLASE1"/>
</dbReference>
<dbReference type="SUPFAM" id="SSF51445">
    <property type="entry name" value="(Trans)glycosidases"/>
    <property type="match status" value="1"/>
</dbReference>
<dbReference type="PROSITE" id="PS00572">
    <property type="entry name" value="GLYCOSYL_HYDROL_F1_1"/>
    <property type="match status" value="1"/>
</dbReference>
<dbReference type="PROSITE" id="PS00653">
    <property type="entry name" value="GLYCOSYL_HYDROL_F1_2"/>
    <property type="match status" value="1"/>
</dbReference>
<proteinExistence type="evidence at protein level"/>
<keyword id="KW-0150">Chloroplast</keyword>
<keyword id="KW-1015">Disulfide bond</keyword>
<keyword id="KW-0326">Glycosidase</keyword>
<keyword id="KW-0378">Hydrolase</keyword>
<keyword id="KW-0934">Plastid</keyword>
<keyword id="KW-1185">Reference proteome</keyword>
<keyword id="KW-0809">Transit peptide</keyword>
<evidence type="ECO:0000250" key="1"/>
<evidence type="ECO:0000250" key="2">
    <source>
        <dbReference type="UniProtKB" id="Q7XSK0"/>
    </source>
</evidence>
<evidence type="ECO:0000250" key="3">
    <source>
        <dbReference type="UniProtKB" id="Q8GU20"/>
    </source>
</evidence>
<evidence type="ECO:0000250" key="4">
    <source>
        <dbReference type="UniProtKB" id="Q9SPP9"/>
    </source>
</evidence>
<evidence type="ECO:0000255" key="5"/>
<evidence type="ECO:0000255" key="6">
    <source>
        <dbReference type="PROSITE-ProRule" id="PRU10055"/>
    </source>
</evidence>
<evidence type="ECO:0000256" key="7">
    <source>
        <dbReference type="SAM" id="MobiDB-lite"/>
    </source>
</evidence>
<evidence type="ECO:0000269" key="8">
    <source>
    </source>
</evidence>
<evidence type="ECO:0000305" key="9"/>
<organism>
    <name type="scientific">Zea mays</name>
    <name type="common">Maize</name>
    <dbReference type="NCBI Taxonomy" id="4577"/>
    <lineage>
        <taxon>Eukaryota</taxon>
        <taxon>Viridiplantae</taxon>
        <taxon>Streptophyta</taxon>
        <taxon>Embryophyta</taxon>
        <taxon>Tracheophyta</taxon>
        <taxon>Spermatophyta</taxon>
        <taxon>Magnoliopsida</taxon>
        <taxon>Liliopsida</taxon>
        <taxon>Poales</taxon>
        <taxon>Poaceae</taxon>
        <taxon>PACMAD clade</taxon>
        <taxon>Panicoideae</taxon>
        <taxon>Andropogonodae</taxon>
        <taxon>Andropogoneae</taxon>
        <taxon>Tripsacinae</taxon>
        <taxon>Zea</taxon>
    </lineage>
</organism>
<accession>Q41761</accession>